<sequence length="230" mass="27097">MKKKKALPSFLYLVFIVLLPWGVSFSFNKCLELWIKNWWNTRQSQTLLTAIQEKRVLERFMELEDLFILDEMIKEKPNTHVQNPPIGIRKEIIQLAKIDNEGHLHIILHFSTNIICLAILSGSFFLGKEELVILNSWVQEFFYNLNDSVKAFFILLVTDFFVGFHSTRGWELLIRWVYNDLGWVPNELIFTIFVCSFPVILDTCLKFWVFFCLNRLSPSLVVIYHSISEA</sequence>
<organism>
    <name type="scientific">Oryza sativa</name>
    <name type="common">Rice</name>
    <dbReference type="NCBI Taxonomy" id="4530"/>
    <lineage>
        <taxon>Eukaryota</taxon>
        <taxon>Viridiplantae</taxon>
        <taxon>Streptophyta</taxon>
        <taxon>Embryophyta</taxon>
        <taxon>Tracheophyta</taxon>
        <taxon>Spermatophyta</taxon>
        <taxon>Magnoliopsida</taxon>
        <taxon>Liliopsida</taxon>
        <taxon>Poales</taxon>
        <taxon>Poaceae</taxon>
        <taxon>BOP clade</taxon>
        <taxon>Oryzoideae</taxon>
        <taxon>Oryzeae</taxon>
        <taxon>Oryzinae</taxon>
        <taxon>Oryza</taxon>
    </lineage>
</organism>
<proteinExistence type="inferred from homology"/>
<gene>
    <name evidence="1" type="primary">cemA</name>
    <name type="synonym">ycf10</name>
</gene>
<keyword id="KW-0050">Antiport</keyword>
<keyword id="KW-0150">Chloroplast</keyword>
<keyword id="KW-0375">Hydrogen ion transport</keyword>
<keyword id="KW-0406">Ion transport</keyword>
<keyword id="KW-0472">Membrane</keyword>
<keyword id="KW-0934">Plastid</keyword>
<keyword id="KW-1001">Plastid inner membrane</keyword>
<keyword id="KW-0630">Potassium</keyword>
<keyword id="KW-0633">Potassium transport</keyword>
<keyword id="KW-0812">Transmembrane</keyword>
<keyword id="KW-1133">Transmembrane helix</keyword>
<keyword id="KW-0813">Transport</keyword>
<reference key="1">
    <citation type="journal article" date="2004" name="Plant Physiol.">
        <title>A comparison of rice chloroplast genomes.</title>
        <authorList>
            <person name="Tang J."/>
            <person name="Xia H."/>
            <person name="Cao M."/>
            <person name="Zhang X."/>
            <person name="Zeng W."/>
            <person name="Hu S."/>
            <person name="Tong W."/>
            <person name="Wang J."/>
            <person name="Wang J."/>
            <person name="Yu J."/>
            <person name="Yang H."/>
            <person name="Zhu L."/>
        </authorList>
    </citation>
    <scope>NUCLEOTIDE SEQUENCE [LARGE SCALE GENOMIC DNA]</scope>
    <source>
        <strain>cv. PA64s</strain>
    </source>
</reference>
<dbReference type="EMBL" id="AY522331">
    <property type="status" value="NOT_ANNOTATED_CDS"/>
    <property type="molecule type" value="Genomic_DNA"/>
</dbReference>
<dbReference type="RefSeq" id="YP_009305316.1">
    <property type="nucleotide sequence ID" value="NC_031333.1"/>
</dbReference>
<dbReference type="GeneID" id="29141382"/>
<dbReference type="GO" id="GO:0009706">
    <property type="term" value="C:chloroplast inner membrane"/>
    <property type="evidence" value="ECO:0007669"/>
    <property type="project" value="UniProtKB-SubCell"/>
</dbReference>
<dbReference type="GO" id="GO:0009536">
    <property type="term" value="C:plastid"/>
    <property type="evidence" value="ECO:0000305"/>
    <property type="project" value="Gramene"/>
</dbReference>
<dbReference type="GO" id="GO:0015297">
    <property type="term" value="F:antiporter activity"/>
    <property type="evidence" value="ECO:0007669"/>
    <property type="project" value="UniProtKB-KW"/>
</dbReference>
<dbReference type="GO" id="GO:0015078">
    <property type="term" value="F:proton transmembrane transporter activity"/>
    <property type="evidence" value="ECO:0007669"/>
    <property type="project" value="UniProtKB-UniRule"/>
</dbReference>
<dbReference type="GO" id="GO:0006813">
    <property type="term" value="P:potassium ion transport"/>
    <property type="evidence" value="ECO:0007669"/>
    <property type="project" value="UniProtKB-UniRule"/>
</dbReference>
<dbReference type="HAMAP" id="MF_01308">
    <property type="entry name" value="CemA_PxcA"/>
    <property type="match status" value="1"/>
</dbReference>
<dbReference type="InterPro" id="IPR004282">
    <property type="entry name" value="CemA"/>
</dbReference>
<dbReference type="PANTHER" id="PTHR33650:SF2">
    <property type="entry name" value="CHLOROPLAST ENVELOPE MEMBRANE PROTEIN"/>
    <property type="match status" value="1"/>
</dbReference>
<dbReference type="PANTHER" id="PTHR33650">
    <property type="entry name" value="CHLOROPLAST ENVELOPE MEMBRANE PROTEIN-RELATED"/>
    <property type="match status" value="1"/>
</dbReference>
<dbReference type="Pfam" id="PF03040">
    <property type="entry name" value="CemA"/>
    <property type="match status" value="1"/>
</dbReference>
<accession>P0C302</accession>
<comment type="function">
    <text evidence="1">Contributes to K(+)/H(+) antiport activity by supporting proton efflux to control proton extrusion and homeostasis in chloroplasts in a light-dependent manner to modulate photosynthesis. Prevents excessive induction of non-photochemical quenching (NPQ) under continuous-light conditions. Indirectly promotes efficient inorganic carbon uptake into chloroplasts.</text>
</comment>
<comment type="catalytic activity">
    <reaction evidence="1">
        <text>K(+)(in) + H(+)(out) = K(+)(out) + H(+)(in)</text>
        <dbReference type="Rhea" id="RHEA:29467"/>
        <dbReference type="ChEBI" id="CHEBI:15378"/>
        <dbReference type="ChEBI" id="CHEBI:29103"/>
    </reaction>
</comment>
<comment type="subcellular location">
    <subcellularLocation>
        <location evidence="1">Plastid</location>
        <location evidence="1">Chloroplast inner membrane</location>
        <topology evidence="1">Multi-pass membrane protein</topology>
    </subcellularLocation>
</comment>
<comment type="similarity">
    <text evidence="1 2">Belongs to the CemA family.</text>
</comment>
<name>CEMA_ORYSA</name>
<feature type="chain" id="PRO_0000288510" description="Potassium/proton antiporter CemA">
    <location>
        <begin position="1"/>
        <end position="230"/>
    </location>
</feature>
<feature type="transmembrane region" description="Helical" evidence="1">
    <location>
        <begin position="7"/>
        <end position="27"/>
    </location>
</feature>
<feature type="transmembrane region" description="Helical" evidence="1">
    <location>
        <begin position="106"/>
        <end position="126"/>
    </location>
</feature>
<feature type="transmembrane region" description="Helical" evidence="1">
    <location>
        <begin position="145"/>
        <end position="165"/>
    </location>
</feature>
<feature type="transmembrane region" description="Helical" evidence="1">
    <location>
        <begin position="181"/>
        <end position="201"/>
    </location>
</feature>
<evidence type="ECO:0000255" key="1">
    <source>
        <dbReference type="HAMAP-Rule" id="MF_01308"/>
    </source>
</evidence>
<evidence type="ECO:0000305" key="2"/>
<geneLocation type="chloroplast"/>
<protein>
    <recommendedName>
        <fullName evidence="1">Potassium/proton antiporter CemA</fullName>
    </recommendedName>
    <alternativeName>
        <fullName evidence="1">Chloroplast envelope membrane protein A</fullName>
        <shortName evidence="1">CemA</shortName>
    </alternativeName>
</protein>